<proteinExistence type="inferred from homology"/>
<name>RL30_YERE8</name>
<feature type="chain" id="PRO_1000056130" description="Large ribosomal subunit protein uL30">
    <location>
        <begin position="1"/>
        <end position="59"/>
    </location>
</feature>
<comment type="subunit">
    <text evidence="1">Part of the 50S ribosomal subunit.</text>
</comment>
<comment type="similarity">
    <text evidence="1">Belongs to the universal ribosomal protein uL30 family.</text>
</comment>
<protein>
    <recommendedName>
        <fullName evidence="1">Large ribosomal subunit protein uL30</fullName>
    </recommendedName>
    <alternativeName>
        <fullName evidence="2">50S ribosomal protein L30</fullName>
    </alternativeName>
</protein>
<reference key="1">
    <citation type="journal article" date="2006" name="PLoS Genet.">
        <title>The complete genome sequence and comparative genome analysis of the high pathogenicity Yersinia enterocolitica strain 8081.</title>
        <authorList>
            <person name="Thomson N.R."/>
            <person name="Howard S."/>
            <person name="Wren B.W."/>
            <person name="Holden M.T.G."/>
            <person name="Crossman L."/>
            <person name="Challis G.L."/>
            <person name="Churcher C."/>
            <person name="Mungall K."/>
            <person name="Brooks K."/>
            <person name="Chillingworth T."/>
            <person name="Feltwell T."/>
            <person name="Abdellah Z."/>
            <person name="Hauser H."/>
            <person name="Jagels K."/>
            <person name="Maddison M."/>
            <person name="Moule S."/>
            <person name="Sanders M."/>
            <person name="Whitehead S."/>
            <person name="Quail M.A."/>
            <person name="Dougan G."/>
            <person name="Parkhill J."/>
            <person name="Prentice M.B."/>
        </authorList>
    </citation>
    <scope>NUCLEOTIDE SEQUENCE [LARGE SCALE GENOMIC DNA]</scope>
    <source>
        <strain>NCTC 13174 / 8081</strain>
    </source>
</reference>
<accession>A1JS10</accession>
<organism>
    <name type="scientific">Yersinia enterocolitica serotype O:8 / biotype 1B (strain NCTC 13174 / 8081)</name>
    <dbReference type="NCBI Taxonomy" id="393305"/>
    <lineage>
        <taxon>Bacteria</taxon>
        <taxon>Pseudomonadati</taxon>
        <taxon>Pseudomonadota</taxon>
        <taxon>Gammaproteobacteria</taxon>
        <taxon>Enterobacterales</taxon>
        <taxon>Yersiniaceae</taxon>
        <taxon>Yersinia</taxon>
    </lineage>
</organism>
<gene>
    <name evidence="1" type="primary">rpmD</name>
    <name type="ordered locus">YE3905</name>
</gene>
<dbReference type="EMBL" id="AM286415">
    <property type="protein sequence ID" value="CAL13924.1"/>
    <property type="molecule type" value="Genomic_DNA"/>
</dbReference>
<dbReference type="RefSeq" id="WP_002213339.1">
    <property type="nucleotide sequence ID" value="NC_008800.1"/>
</dbReference>
<dbReference type="RefSeq" id="YP_001008050.1">
    <property type="nucleotide sequence ID" value="NC_008800.1"/>
</dbReference>
<dbReference type="SMR" id="A1JS10"/>
<dbReference type="GeneID" id="97454249"/>
<dbReference type="KEGG" id="yen:YE3905"/>
<dbReference type="PATRIC" id="fig|393305.7.peg.4155"/>
<dbReference type="eggNOG" id="COG1841">
    <property type="taxonomic scope" value="Bacteria"/>
</dbReference>
<dbReference type="HOGENOM" id="CLU_131047_1_4_6"/>
<dbReference type="OrthoDB" id="9812790at2"/>
<dbReference type="Proteomes" id="UP000000642">
    <property type="component" value="Chromosome"/>
</dbReference>
<dbReference type="GO" id="GO:0022625">
    <property type="term" value="C:cytosolic large ribosomal subunit"/>
    <property type="evidence" value="ECO:0007669"/>
    <property type="project" value="TreeGrafter"/>
</dbReference>
<dbReference type="GO" id="GO:0003735">
    <property type="term" value="F:structural constituent of ribosome"/>
    <property type="evidence" value="ECO:0007669"/>
    <property type="project" value="InterPro"/>
</dbReference>
<dbReference type="GO" id="GO:0006412">
    <property type="term" value="P:translation"/>
    <property type="evidence" value="ECO:0007669"/>
    <property type="project" value="UniProtKB-UniRule"/>
</dbReference>
<dbReference type="CDD" id="cd01658">
    <property type="entry name" value="Ribosomal_L30"/>
    <property type="match status" value="1"/>
</dbReference>
<dbReference type="FunFam" id="3.30.1390.20:FF:000001">
    <property type="entry name" value="50S ribosomal protein L30"/>
    <property type="match status" value="1"/>
</dbReference>
<dbReference type="Gene3D" id="3.30.1390.20">
    <property type="entry name" value="Ribosomal protein L30, ferredoxin-like fold domain"/>
    <property type="match status" value="1"/>
</dbReference>
<dbReference type="HAMAP" id="MF_01371_B">
    <property type="entry name" value="Ribosomal_uL30_B"/>
    <property type="match status" value="1"/>
</dbReference>
<dbReference type="InterPro" id="IPR036919">
    <property type="entry name" value="Ribo_uL30_ferredoxin-like_sf"/>
</dbReference>
<dbReference type="InterPro" id="IPR005996">
    <property type="entry name" value="Ribosomal_uL30_bac-type"/>
</dbReference>
<dbReference type="InterPro" id="IPR018038">
    <property type="entry name" value="Ribosomal_uL30_CS"/>
</dbReference>
<dbReference type="InterPro" id="IPR016082">
    <property type="entry name" value="Ribosomal_uL30_ferredoxin-like"/>
</dbReference>
<dbReference type="NCBIfam" id="TIGR01308">
    <property type="entry name" value="rpmD_bact"/>
    <property type="match status" value="1"/>
</dbReference>
<dbReference type="PANTHER" id="PTHR15892:SF2">
    <property type="entry name" value="LARGE RIBOSOMAL SUBUNIT PROTEIN UL30M"/>
    <property type="match status" value="1"/>
</dbReference>
<dbReference type="PANTHER" id="PTHR15892">
    <property type="entry name" value="MITOCHONDRIAL RIBOSOMAL PROTEIN L30"/>
    <property type="match status" value="1"/>
</dbReference>
<dbReference type="Pfam" id="PF00327">
    <property type="entry name" value="Ribosomal_L30"/>
    <property type="match status" value="1"/>
</dbReference>
<dbReference type="PIRSF" id="PIRSF002211">
    <property type="entry name" value="Ribosomal_L30_bac-type"/>
    <property type="match status" value="1"/>
</dbReference>
<dbReference type="SUPFAM" id="SSF55129">
    <property type="entry name" value="Ribosomal protein L30p/L7e"/>
    <property type="match status" value="1"/>
</dbReference>
<dbReference type="PROSITE" id="PS00634">
    <property type="entry name" value="RIBOSOMAL_L30"/>
    <property type="match status" value="1"/>
</dbReference>
<sequence>MAKTIKVTQTKSSIGRLPKHKATLIGLGLRRIGHTVEREDTPAVRGMVNLVSYMVKVEE</sequence>
<keyword id="KW-0687">Ribonucleoprotein</keyword>
<keyword id="KW-0689">Ribosomal protein</keyword>
<evidence type="ECO:0000255" key="1">
    <source>
        <dbReference type="HAMAP-Rule" id="MF_01371"/>
    </source>
</evidence>
<evidence type="ECO:0000305" key="2"/>